<organism>
    <name type="scientific">Mycoplasmopsis agalactiae (strain NCTC 10123 / CIP 59.7 / PG2)</name>
    <name type="common">Mycoplasma agalactiae</name>
    <dbReference type="NCBI Taxonomy" id="347257"/>
    <lineage>
        <taxon>Bacteria</taxon>
        <taxon>Bacillati</taxon>
        <taxon>Mycoplasmatota</taxon>
        <taxon>Mycoplasmoidales</taxon>
        <taxon>Metamycoplasmataceae</taxon>
        <taxon>Mycoplasmopsis</taxon>
    </lineage>
</organism>
<sequence length="421" mass="46094">MYKKISMNDKEIEHAINNEVDRQNEHIELIASENYVSEDVLTAVGSVLTNKYGEGYPGKRYYGGCENVDVVETLAIERLKKLFGVKFANVQPYSGSVANAAALATLASQGDKIMGLDLASGGHLTHGYKISFSGIFYNSITYSVNEDGILDYEAIKELAIKEKPKVIICGYSAYSRIVDFKKFREIADACGAKLMADIAHIAGLIAGGVHPSPVPYADIITSTTHKTLRGARGAIIMTNDVEIAKKMNRWVFPGYQGGPLFHAIAGKAVAFGEALKPEYAAYAKSVVYNAREFSNYFIKQGVSIVSGGTDNHLFTINVNKSYGISGLQAEKILGKFNITVNKNTVPFDELSPAVTSGIRIGTAAMSSRKFAKWKELGAIMHEILQNCVEFSENESKHLDRIAELKKQVEALTTEFPIITKY</sequence>
<protein>
    <recommendedName>
        <fullName evidence="1">Serine hydroxymethyltransferase</fullName>
        <shortName evidence="1">SHMT</shortName>
        <shortName evidence="1">Serine methylase</shortName>
        <ecNumber evidence="1">2.1.2.1</ecNumber>
    </recommendedName>
</protein>
<proteinExistence type="inferred from homology"/>
<gene>
    <name evidence="1" type="primary">glyA</name>
    <name type="ordered locus">MAG0700</name>
</gene>
<accession>A5IXK9</accession>
<keyword id="KW-0028">Amino-acid biosynthesis</keyword>
<keyword id="KW-0963">Cytoplasm</keyword>
<keyword id="KW-0554">One-carbon metabolism</keyword>
<keyword id="KW-0663">Pyridoxal phosphate</keyword>
<keyword id="KW-1185">Reference proteome</keyword>
<keyword id="KW-0808">Transferase</keyword>
<comment type="function">
    <text evidence="1">Catalyzes the reversible interconversion of serine and glycine with tetrahydrofolate (THF) serving as the one-carbon carrier. This reaction serves as the major source of one-carbon groups required for the biosynthesis of purines, thymidylate, methionine, and other important biomolecules. Also exhibits THF-independent aldolase activity toward beta-hydroxyamino acids, producing glycine and aldehydes, via a retro-aldol mechanism.</text>
</comment>
<comment type="catalytic activity">
    <reaction evidence="1">
        <text>(6R)-5,10-methylene-5,6,7,8-tetrahydrofolate + glycine + H2O = (6S)-5,6,7,8-tetrahydrofolate + L-serine</text>
        <dbReference type="Rhea" id="RHEA:15481"/>
        <dbReference type="ChEBI" id="CHEBI:15377"/>
        <dbReference type="ChEBI" id="CHEBI:15636"/>
        <dbReference type="ChEBI" id="CHEBI:33384"/>
        <dbReference type="ChEBI" id="CHEBI:57305"/>
        <dbReference type="ChEBI" id="CHEBI:57453"/>
        <dbReference type="EC" id="2.1.2.1"/>
    </reaction>
</comment>
<comment type="cofactor">
    <cofactor evidence="1">
        <name>pyridoxal 5'-phosphate</name>
        <dbReference type="ChEBI" id="CHEBI:597326"/>
    </cofactor>
</comment>
<comment type="pathway">
    <text evidence="1">One-carbon metabolism; tetrahydrofolate interconversion.</text>
</comment>
<comment type="pathway">
    <text evidence="1">Amino-acid biosynthesis; glycine biosynthesis; glycine from L-serine: step 1/1.</text>
</comment>
<comment type="subunit">
    <text evidence="1">Homodimer.</text>
</comment>
<comment type="subcellular location">
    <subcellularLocation>
        <location evidence="1">Cytoplasm</location>
    </subcellularLocation>
</comment>
<comment type="similarity">
    <text evidence="1">Belongs to the SHMT family.</text>
</comment>
<evidence type="ECO:0000255" key="1">
    <source>
        <dbReference type="HAMAP-Rule" id="MF_00051"/>
    </source>
</evidence>
<feature type="chain" id="PRO_1000091561" description="Serine hydroxymethyltransferase">
    <location>
        <begin position="1"/>
        <end position="421"/>
    </location>
</feature>
<feature type="binding site" evidence="1">
    <location>
        <position position="118"/>
    </location>
    <ligand>
        <name>(6S)-5,6,7,8-tetrahydrofolate</name>
        <dbReference type="ChEBI" id="CHEBI:57453"/>
    </ligand>
</feature>
<feature type="binding site" evidence="1">
    <location>
        <begin position="122"/>
        <end position="124"/>
    </location>
    <ligand>
        <name>(6S)-5,6,7,8-tetrahydrofolate</name>
        <dbReference type="ChEBI" id="CHEBI:57453"/>
    </ligand>
</feature>
<feature type="site" description="Plays an important role in substrate specificity" evidence="1">
    <location>
        <position position="225"/>
    </location>
</feature>
<feature type="modified residue" description="N6-(pyridoxal phosphate)lysine" evidence="1">
    <location>
        <position position="226"/>
    </location>
</feature>
<name>GLYA_MYCAP</name>
<reference key="1">
    <citation type="journal article" date="2007" name="PLoS Genet.">
        <title>Being pathogenic, plastic, and sexual while living with a nearly minimal bacterial genome.</title>
        <authorList>
            <person name="Sirand-Pugnet P."/>
            <person name="Lartigue C."/>
            <person name="Marenda M."/>
            <person name="Jacob D."/>
            <person name="Barre A."/>
            <person name="Barbe V."/>
            <person name="Schenowitz C."/>
            <person name="Mangenot S."/>
            <person name="Couloux A."/>
            <person name="Segurens B."/>
            <person name="de Daruvar A."/>
            <person name="Blanchard A."/>
            <person name="Citti C."/>
        </authorList>
    </citation>
    <scope>NUCLEOTIDE SEQUENCE [LARGE SCALE GENOMIC DNA]</scope>
    <source>
        <strain>NCTC 10123 / CIP 59.7 / PG2</strain>
    </source>
</reference>
<dbReference type="EC" id="2.1.2.1" evidence="1"/>
<dbReference type="EMBL" id="CU179680">
    <property type="protein sequence ID" value="CAL58768.1"/>
    <property type="molecule type" value="Genomic_DNA"/>
</dbReference>
<dbReference type="RefSeq" id="WP_011949251.1">
    <property type="nucleotide sequence ID" value="NC_009497.1"/>
</dbReference>
<dbReference type="SMR" id="A5IXK9"/>
<dbReference type="STRING" id="347257.MAG0700"/>
<dbReference type="GeneID" id="93357840"/>
<dbReference type="KEGG" id="maa:MAG0700"/>
<dbReference type="HOGENOM" id="CLU_022477_2_1_14"/>
<dbReference type="UniPathway" id="UPA00193"/>
<dbReference type="UniPathway" id="UPA00288">
    <property type="reaction ID" value="UER01023"/>
</dbReference>
<dbReference type="Proteomes" id="UP000007065">
    <property type="component" value="Chromosome"/>
</dbReference>
<dbReference type="GO" id="GO:0005829">
    <property type="term" value="C:cytosol"/>
    <property type="evidence" value="ECO:0007669"/>
    <property type="project" value="TreeGrafter"/>
</dbReference>
<dbReference type="GO" id="GO:0004372">
    <property type="term" value="F:glycine hydroxymethyltransferase activity"/>
    <property type="evidence" value="ECO:0007669"/>
    <property type="project" value="UniProtKB-UniRule"/>
</dbReference>
<dbReference type="GO" id="GO:0030170">
    <property type="term" value="F:pyridoxal phosphate binding"/>
    <property type="evidence" value="ECO:0007669"/>
    <property type="project" value="UniProtKB-UniRule"/>
</dbReference>
<dbReference type="GO" id="GO:0019264">
    <property type="term" value="P:glycine biosynthetic process from serine"/>
    <property type="evidence" value="ECO:0007669"/>
    <property type="project" value="UniProtKB-UniRule"/>
</dbReference>
<dbReference type="GO" id="GO:0035999">
    <property type="term" value="P:tetrahydrofolate interconversion"/>
    <property type="evidence" value="ECO:0007669"/>
    <property type="project" value="UniProtKB-UniRule"/>
</dbReference>
<dbReference type="CDD" id="cd00378">
    <property type="entry name" value="SHMT"/>
    <property type="match status" value="1"/>
</dbReference>
<dbReference type="FunFam" id="3.40.640.10:FF:000001">
    <property type="entry name" value="Serine hydroxymethyltransferase"/>
    <property type="match status" value="1"/>
</dbReference>
<dbReference type="Gene3D" id="3.90.1150.10">
    <property type="entry name" value="Aspartate Aminotransferase, domain 1"/>
    <property type="match status" value="1"/>
</dbReference>
<dbReference type="Gene3D" id="3.40.640.10">
    <property type="entry name" value="Type I PLP-dependent aspartate aminotransferase-like (Major domain)"/>
    <property type="match status" value="1"/>
</dbReference>
<dbReference type="HAMAP" id="MF_00051">
    <property type="entry name" value="SHMT"/>
    <property type="match status" value="1"/>
</dbReference>
<dbReference type="InterPro" id="IPR015424">
    <property type="entry name" value="PyrdxlP-dep_Trfase"/>
</dbReference>
<dbReference type="InterPro" id="IPR015421">
    <property type="entry name" value="PyrdxlP-dep_Trfase_major"/>
</dbReference>
<dbReference type="InterPro" id="IPR015422">
    <property type="entry name" value="PyrdxlP-dep_Trfase_small"/>
</dbReference>
<dbReference type="InterPro" id="IPR001085">
    <property type="entry name" value="Ser_HO-MeTrfase"/>
</dbReference>
<dbReference type="InterPro" id="IPR049943">
    <property type="entry name" value="Ser_HO-MeTrfase-like"/>
</dbReference>
<dbReference type="InterPro" id="IPR019798">
    <property type="entry name" value="Ser_HO-MeTrfase_PLP_BS"/>
</dbReference>
<dbReference type="InterPro" id="IPR039429">
    <property type="entry name" value="SHMT-like_dom"/>
</dbReference>
<dbReference type="NCBIfam" id="NF000586">
    <property type="entry name" value="PRK00011.1"/>
    <property type="match status" value="1"/>
</dbReference>
<dbReference type="PANTHER" id="PTHR11680">
    <property type="entry name" value="SERINE HYDROXYMETHYLTRANSFERASE"/>
    <property type="match status" value="1"/>
</dbReference>
<dbReference type="PANTHER" id="PTHR11680:SF35">
    <property type="entry name" value="SERINE HYDROXYMETHYLTRANSFERASE 1"/>
    <property type="match status" value="1"/>
</dbReference>
<dbReference type="Pfam" id="PF00464">
    <property type="entry name" value="SHMT"/>
    <property type="match status" value="1"/>
</dbReference>
<dbReference type="PIRSF" id="PIRSF000412">
    <property type="entry name" value="SHMT"/>
    <property type="match status" value="1"/>
</dbReference>
<dbReference type="SUPFAM" id="SSF53383">
    <property type="entry name" value="PLP-dependent transferases"/>
    <property type="match status" value="1"/>
</dbReference>
<dbReference type="PROSITE" id="PS00096">
    <property type="entry name" value="SHMT"/>
    <property type="match status" value="1"/>
</dbReference>